<sequence length="318" mass="36382">MLAPKKMVRGNYSMVTEFILLGLTDRPELQPLLFVLFLVIYLITVGGNLGMMVLIRIDSRLHTPMYYFLASLSCLDLCYSTNVTPKMLVNFLSEKKTISYAACLVQCYFFIAMVITEYYMLAVMAYDRYMAICNPLLYSSKMSKGVCVRLIAGPYIYGFLSGLMETMWTYRLTFCGSNIINHFYCADPPLIRLSCSDTFIKETSMFVVAGFNLSNSLFIILISYLFILIAILRMRSAEGRRKAFSTCGSHLVAVTVFYGTLFCMYVRPPTDKSVEQSKIIAVFYTFVSPMLNPIIYSLRNKDVKHAFWKLVRRNVLSK</sequence>
<reference key="1">
    <citation type="journal article" date="2002" name="Nat. Neurosci.">
        <title>The olfactory receptor gene superfamily of the mouse.</title>
        <authorList>
            <person name="Zhang X."/>
            <person name="Firestein S."/>
        </authorList>
    </citation>
    <scope>NUCLEOTIDE SEQUENCE [GENOMIC DNA]</scope>
</reference>
<reference key="2">
    <citation type="journal article" date="2002" name="Hum. Mol. Genet.">
        <title>Different evolutionary processes shaped the mouse and human olfactory receptor gene families.</title>
        <authorList>
            <person name="Young J.M."/>
            <person name="Friedman C."/>
            <person name="Williams E.M."/>
            <person name="Ross J.A."/>
            <person name="Tonnes-Priddy L."/>
            <person name="Trask B.J."/>
        </authorList>
    </citation>
    <scope>NUCLEOTIDE SEQUENCE [GENOMIC DNA]</scope>
</reference>
<reference key="3">
    <citation type="journal article" date="2002" name="Hum. Mol. Genet.">
        <authorList>
            <person name="Young J.M."/>
            <person name="Friedman C."/>
            <person name="Williams E.M."/>
            <person name="Ross J.A."/>
            <person name="Tonnes-Priddy L."/>
            <person name="Trask B.J."/>
        </authorList>
    </citation>
    <scope>ERRATUM OF PUBMED:11875048</scope>
</reference>
<evidence type="ECO:0000255" key="1"/>
<evidence type="ECO:0000255" key="2">
    <source>
        <dbReference type="PROSITE-ProRule" id="PRU00521"/>
    </source>
</evidence>
<evidence type="ECO:0000305" key="3"/>
<evidence type="ECO:0000312" key="4">
    <source>
        <dbReference type="MGI" id="MGI:3030864"/>
    </source>
</evidence>
<keyword id="KW-1003">Cell membrane</keyword>
<keyword id="KW-1015">Disulfide bond</keyword>
<keyword id="KW-0297">G-protein coupled receptor</keyword>
<keyword id="KW-0325">Glycoprotein</keyword>
<keyword id="KW-0472">Membrane</keyword>
<keyword id="KW-0552">Olfaction</keyword>
<keyword id="KW-0675">Receptor</keyword>
<keyword id="KW-1185">Reference proteome</keyword>
<keyword id="KW-0716">Sensory transduction</keyword>
<keyword id="KW-0807">Transducer</keyword>
<keyword id="KW-0812">Transmembrane</keyword>
<keyword id="KW-1133">Transmembrane helix</keyword>
<accession>Q8VFL5</accession>
<name>OR5M5_MOUSE</name>
<comment type="function">
    <text>Potential odorant receptor.</text>
</comment>
<comment type="subcellular location">
    <subcellularLocation>
        <location evidence="3">Cell membrane</location>
        <topology evidence="1">Multi-pass membrane protein</topology>
    </subcellularLocation>
</comment>
<comment type="similarity">
    <text evidence="2">Belongs to the G-protein coupled receptor 1 family.</text>
</comment>
<comment type="sequence caution" evidence="3">
    <conflict type="erroneous initiation">
        <sequence resource="EMBL-CDS" id="AAP71477"/>
    </conflict>
</comment>
<gene>
    <name evidence="4" type="primary">Or5m5</name>
    <name evidence="4" type="synonym">Mor196-2</name>
    <name evidence="4" type="synonym">Olfr1030</name>
</gene>
<dbReference type="EMBL" id="AY073509">
    <property type="protein sequence ID" value="AAL61172.1"/>
    <property type="molecule type" value="Genomic_DNA"/>
</dbReference>
<dbReference type="EMBL" id="AY318225">
    <property type="protein sequence ID" value="AAP71477.1"/>
    <property type="status" value="ALT_INIT"/>
    <property type="molecule type" value="Genomic_DNA"/>
</dbReference>
<dbReference type="CCDS" id="CCDS16231.1"/>
<dbReference type="RefSeq" id="NP_666799.1">
    <property type="nucleotide sequence ID" value="NM_146588.2"/>
</dbReference>
<dbReference type="SMR" id="Q8VFL5"/>
<dbReference type="FunCoup" id="Q8VFL5">
    <property type="interactions" value="1242"/>
</dbReference>
<dbReference type="STRING" id="10090.ENSMUSP00000053309"/>
<dbReference type="GlyCosmos" id="Q8VFL5">
    <property type="glycosylation" value="1 site, No reported glycans"/>
</dbReference>
<dbReference type="GlyGen" id="Q8VFL5">
    <property type="glycosylation" value="1 site"/>
</dbReference>
<dbReference type="PaxDb" id="10090-ENSMUSP00000053309"/>
<dbReference type="Ensembl" id="ENSMUST00000056849.3">
    <property type="protein sequence ID" value="ENSMUSP00000053309.2"/>
    <property type="gene ID" value="ENSMUSG00000044923.5"/>
</dbReference>
<dbReference type="GeneID" id="258581"/>
<dbReference type="KEGG" id="mmu:258581"/>
<dbReference type="UCSC" id="uc008klh.2">
    <property type="organism name" value="mouse"/>
</dbReference>
<dbReference type="AGR" id="MGI:3030864"/>
<dbReference type="CTD" id="258581"/>
<dbReference type="MGI" id="MGI:3030864">
    <property type="gene designation" value="Or5m5"/>
</dbReference>
<dbReference type="VEuPathDB" id="HostDB:ENSMUSG00000044923"/>
<dbReference type="eggNOG" id="ENOG502TC7V">
    <property type="taxonomic scope" value="Eukaryota"/>
</dbReference>
<dbReference type="GeneTree" id="ENSGT01120000271889"/>
<dbReference type="HOGENOM" id="CLU_012526_1_0_1"/>
<dbReference type="InParanoid" id="Q8VFL5"/>
<dbReference type="OMA" id="DVKQAFW"/>
<dbReference type="OrthoDB" id="6147321at2759"/>
<dbReference type="PhylomeDB" id="Q8VFL5"/>
<dbReference type="TreeFam" id="TF352751"/>
<dbReference type="BioGRID-ORCS" id="258581">
    <property type="hits" value="2 hits in 70 CRISPR screens"/>
</dbReference>
<dbReference type="PRO" id="PR:Q8VFL5"/>
<dbReference type="Proteomes" id="UP000000589">
    <property type="component" value="Chromosome 2"/>
</dbReference>
<dbReference type="RNAct" id="Q8VFL5">
    <property type="molecule type" value="protein"/>
</dbReference>
<dbReference type="ExpressionAtlas" id="Q8VFL5">
    <property type="expression patterns" value="baseline and differential"/>
</dbReference>
<dbReference type="GO" id="GO:0016020">
    <property type="term" value="C:membrane"/>
    <property type="evidence" value="ECO:0000247"/>
    <property type="project" value="MGI"/>
</dbReference>
<dbReference type="GO" id="GO:0005886">
    <property type="term" value="C:plasma membrane"/>
    <property type="evidence" value="ECO:0007669"/>
    <property type="project" value="UniProtKB-SubCell"/>
</dbReference>
<dbReference type="GO" id="GO:0004930">
    <property type="term" value="F:G protein-coupled receptor activity"/>
    <property type="evidence" value="ECO:0007669"/>
    <property type="project" value="UniProtKB-KW"/>
</dbReference>
<dbReference type="GO" id="GO:0004984">
    <property type="term" value="F:olfactory receptor activity"/>
    <property type="evidence" value="ECO:0000247"/>
    <property type="project" value="MGI"/>
</dbReference>
<dbReference type="GO" id="GO:0007186">
    <property type="term" value="P:G protein-coupled receptor signaling pathway"/>
    <property type="evidence" value="ECO:0000247"/>
    <property type="project" value="MGI"/>
</dbReference>
<dbReference type="GO" id="GO:0007608">
    <property type="term" value="P:sensory perception of smell"/>
    <property type="evidence" value="ECO:0000247"/>
    <property type="project" value="MGI"/>
</dbReference>
<dbReference type="CDD" id="cd15412">
    <property type="entry name" value="7tmA_OR5M-like"/>
    <property type="match status" value="1"/>
</dbReference>
<dbReference type="FunFam" id="1.20.1070.10:FF:000003">
    <property type="entry name" value="Olfactory receptor"/>
    <property type="match status" value="1"/>
</dbReference>
<dbReference type="Gene3D" id="1.20.1070.10">
    <property type="entry name" value="Rhodopsin 7-helix transmembrane proteins"/>
    <property type="match status" value="1"/>
</dbReference>
<dbReference type="InterPro" id="IPR000276">
    <property type="entry name" value="GPCR_Rhodpsn"/>
</dbReference>
<dbReference type="InterPro" id="IPR017452">
    <property type="entry name" value="GPCR_Rhodpsn_7TM"/>
</dbReference>
<dbReference type="InterPro" id="IPR000725">
    <property type="entry name" value="Olfact_rcpt"/>
</dbReference>
<dbReference type="PANTHER" id="PTHR48018">
    <property type="entry name" value="OLFACTORY RECEPTOR"/>
    <property type="match status" value="1"/>
</dbReference>
<dbReference type="Pfam" id="PF13853">
    <property type="entry name" value="7tm_4"/>
    <property type="match status" value="1"/>
</dbReference>
<dbReference type="PRINTS" id="PR00237">
    <property type="entry name" value="GPCRRHODOPSN"/>
</dbReference>
<dbReference type="PRINTS" id="PR00245">
    <property type="entry name" value="OLFACTORYR"/>
</dbReference>
<dbReference type="SUPFAM" id="SSF81321">
    <property type="entry name" value="Family A G protein-coupled receptor-like"/>
    <property type="match status" value="1"/>
</dbReference>
<dbReference type="PROSITE" id="PS00237">
    <property type="entry name" value="G_PROTEIN_RECEP_F1_1"/>
    <property type="match status" value="1"/>
</dbReference>
<dbReference type="PROSITE" id="PS50262">
    <property type="entry name" value="G_PROTEIN_RECEP_F1_2"/>
    <property type="match status" value="1"/>
</dbReference>
<organism>
    <name type="scientific">Mus musculus</name>
    <name type="common">Mouse</name>
    <dbReference type="NCBI Taxonomy" id="10090"/>
    <lineage>
        <taxon>Eukaryota</taxon>
        <taxon>Metazoa</taxon>
        <taxon>Chordata</taxon>
        <taxon>Craniata</taxon>
        <taxon>Vertebrata</taxon>
        <taxon>Euteleostomi</taxon>
        <taxon>Mammalia</taxon>
        <taxon>Eutheria</taxon>
        <taxon>Euarchontoglires</taxon>
        <taxon>Glires</taxon>
        <taxon>Rodentia</taxon>
        <taxon>Myomorpha</taxon>
        <taxon>Muroidea</taxon>
        <taxon>Muridae</taxon>
        <taxon>Murinae</taxon>
        <taxon>Mus</taxon>
        <taxon>Mus</taxon>
    </lineage>
</organism>
<feature type="chain" id="PRO_0000150862" description="Olfactory receptor 5M5">
    <location>
        <begin position="1"/>
        <end position="318"/>
    </location>
</feature>
<feature type="topological domain" description="Extracellular" evidence="1">
    <location>
        <begin position="1"/>
        <end position="31"/>
    </location>
</feature>
<feature type="transmembrane region" description="Helical; Name=1" evidence="1">
    <location>
        <begin position="32"/>
        <end position="52"/>
    </location>
</feature>
<feature type="topological domain" description="Cytoplasmic" evidence="1">
    <location>
        <begin position="53"/>
        <end position="60"/>
    </location>
</feature>
<feature type="transmembrane region" description="Helical; Name=2" evidence="1">
    <location>
        <begin position="61"/>
        <end position="81"/>
    </location>
</feature>
<feature type="topological domain" description="Extracellular" evidence="1">
    <location>
        <begin position="82"/>
        <end position="105"/>
    </location>
</feature>
<feature type="transmembrane region" description="Helical; Name=3" evidence="1">
    <location>
        <begin position="106"/>
        <end position="126"/>
    </location>
</feature>
<feature type="topological domain" description="Cytoplasmic" evidence="1">
    <location>
        <begin position="127"/>
        <end position="139"/>
    </location>
</feature>
<feature type="transmembrane region" description="Helical; Name=4" evidence="1">
    <location>
        <begin position="140"/>
        <end position="160"/>
    </location>
</feature>
<feature type="topological domain" description="Extracellular" evidence="1">
    <location>
        <begin position="161"/>
        <end position="202"/>
    </location>
</feature>
<feature type="transmembrane region" description="Helical; Name=5" evidence="1">
    <location>
        <begin position="203"/>
        <end position="223"/>
    </location>
</feature>
<feature type="topological domain" description="Cytoplasmic" evidence="1">
    <location>
        <begin position="224"/>
        <end position="243"/>
    </location>
</feature>
<feature type="transmembrane region" description="Helical; Name=6" evidence="1">
    <location>
        <begin position="244"/>
        <end position="264"/>
    </location>
</feature>
<feature type="topological domain" description="Extracellular" evidence="1">
    <location>
        <begin position="265"/>
        <end position="277"/>
    </location>
</feature>
<feature type="transmembrane region" description="Helical; Name=7" evidence="1">
    <location>
        <begin position="278"/>
        <end position="298"/>
    </location>
</feature>
<feature type="topological domain" description="Cytoplasmic" evidence="1">
    <location>
        <begin position="299"/>
        <end position="318"/>
    </location>
</feature>
<feature type="glycosylation site" description="N-linked (GlcNAc...) asparagine" evidence="1">
    <location>
        <position position="11"/>
    </location>
</feature>
<feature type="disulfide bond" evidence="2">
    <location>
        <begin position="103"/>
        <end position="195"/>
    </location>
</feature>
<protein>
    <recommendedName>
        <fullName evidence="3">Olfactory receptor 5M5</fullName>
    </recommendedName>
    <alternativeName>
        <fullName>Olfactory receptor 1030</fullName>
    </alternativeName>
    <alternativeName>
        <fullName>Olfactory receptor 196-2</fullName>
    </alternativeName>
</protein>
<proteinExistence type="inferred from homology"/>